<comment type="function">
    <text evidence="1">Regulator of microtubule stability. When phosphorylated by MAPK8, stabilizes microtubules and consequently controls neurite length in cortical neurons. In the developing brain, negatively regulates the rate of exit from multipolar stage and retards radial migration from the ventricular zone (By similarity).</text>
</comment>
<comment type="subunit">
    <text evidence="1 8 9 10">Interacts with MAPK8 (By similarity). Interacts with ITM2C. Interacts with KIFBP. Interacts (via the N-terminal region) with CIB1 (via C-terminal region); the interaction is direct, occurs in a calcium-dependent manner and attenuates the neurite outgrowth inhibition of STMN2.</text>
</comment>
<comment type="interaction">
    <interactant intactId="EBI-714194">
        <id>Q93045</id>
    </interactant>
    <interactant intactId="EBI-10175300">
        <id>Q8TD31-3</id>
        <label>CCHCR1</label>
    </interactant>
    <organismsDiffer>false</organismsDiffer>
    <experiments>3</experiments>
</comment>
<comment type="interaction">
    <interactant intactId="EBI-714194">
        <id>Q93045</id>
    </interactant>
    <interactant intactId="EBI-372594">
        <id>Q99828</id>
        <label>CIB1</label>
    </interactant>
    <organismsDiffer>false</organismsDiffer>
    <experiments>8</experiments>
</comment>
<comment type="interaction">
    <interactant intactId="EBI-714194">
        <id>Q93045</id>
    </interactant>
    <interactant intactId="EBI-11962928">
        <id>Q9UI47-2</id>
        <label>CTNNA3</label>
    </interactant>
    <organismsDiffer>false</organismsDiffer>
    <experiments>3</experiments>
</comment>
<comment type="interaction">
    <interactant intactId="EBI-714194">
        <id>Q93045</id>
    </interactant>
    <interactant intactId="EBI-6658203">
        <id>Q86YD7</id>
        <label>FAM90A1</label>
    </interactant>
    <organismsDiffer>false</organismsDiffer>
    <experiments>3</experiments>
</comment>
<comment type="interaction">
    <interactant intactId="EBI-714194">
        <id>Q93045</id>
    </interactant>
    <interactant intactId="EBI-11978579">
        <id>O95983-2</id>
        <label>MBD3</label>
    </interactant>
    <organismsDiffer>false</organismsDiffer>
    <experiments>3</experiments>
</comment>
<comment type="interaction">
    <interactant intactId="EBI-714194">
        <id>Q93045</id>
    </interactant>
    <interactant intactId="EBI-741158">
        <id>Q96HA8</id>
        <label>NTAQ1</label>
    </interactant>
    <organismsDiffer>false</organismsDiffer>
    <experiments>3</experiments>
</comment>
<comment type="interaction">
    <interactant intactId="EBI-714194">
        <id>Q93045</id>
    </interactant>
    <interactant intactId="EBI-372273">
        <id>P20618</id>
        <label>PSMB1</label>
    </interactant>
    <organismsDiffer>false</organismsDiffer>
    <experiments>3</experiments>
</comment>
<comment type="interaction">
    <interactant intactId="EBI-714194">
        <id>Q93045</id>
    </interactant>
    <interactant intactId="EBI-6117072">
        <id>Q86VW0</id>
        <label>SESTD1</label>
    </interactant>
    <organismsDiffer>false</organismsDiffer>
    <experiments>3</experiments>
</comment>
<comment type="interaction">
    <interactant intactId="EBI-714194">
        <id>Q93045</id>
    </interactant>
    <interactant intactId="EBI-742397">
        <id>Q8IYF3</id>
        <label>TEX11</label>
    </interactant>
    <organismsDiffer>false</organismsDiffer>
    <experiments>5</experiments>
</comment>
<comment type="interaction">
    <interactant intactId="EBI-714194">
        <id>Q93045</id>
    </interactant>
    <interactant intactId="EBI-11523345">
        <id>Q8IYF3-3</id>
        <label>TEX11</label>
    </interactant>
    <organismsDiffer>false</organismsDiffer>
    <experiments>3</experiments>
</comment>
<comment type="interaction">
    <interactant intactId="EBI-714194">
        <id>Q93045</id>
    </interactant>
    <interactant intactId="EBI-717422">
        <id>Q12800</id>
        <label>TFCP2</label>
    </interactant>
    <organismsDiffer>false</organismsDiffer>
    <experiments>3</experiments>
</comment>
<comment type="interaction">
    <interactant intactId="EBI-714194">
        <id>Q93045</id>
    </interactant>
    <interactant intactId="EBI-359793">
        <id>P40222</id>
        <label>TXLNA</label>
    </interactant>
    <organismsDiffer>false</organismsDiffer>
    <experiments>4</experiments>
</comment>
<comment type="subcellular location">
    <subcellularLocation>
        <location evidence="1">Cytoplasm</location>
    </subcellularLocation>
    <subcellularLocation>
        <location evidence="1">Cytoplasm</location>
        <location evidence="1">Perinuclear region</location>
    </subcellularLocation>
    <subcellularLocation>
        <location>Cell projection</location>
        <location>Growth cone</location>
    </subcellularLocation>
    <subcellularLocation>
        <location evidence="13">Membrane</location>
        <topology evidence="13">Peripheral membrane protein</topology>
        <orientation evidence="13">Cytoplasmic side</orientation>
    </subcellularLocation>
    <subcellularLocation>
        <location>Cell projection</location>
        <location>Axon</location>
    </subcellularLocation>
    <subcellularLocation>
        <location>Golgi apparatus</location>
    </subcellularLocation>
    <subcellularLocation>
        <location evidence="1">Endosome</location>
    </subcellularLocation>
    <subcellularLocation>
        <location>Cell projection</location>
        <location>Lamellipodium</location>
    </subcellularLocation>
    <text evidence="1">Associated with punctate structures in the perinuclear cytoplasm, axons, and growth cones of developing neurons. SCG10 exists in both soluble and membrane-bound forms. Colocalized with CIB1 in neurites of developing hippocampal primary neurons (By similarity). Colocalized with CIB1 in the cell body, neuritis and growth cones of neurons. Colocalized with CIB1 to the leading edge of lamellipodia.</text>
</comment>
<comment type="alternative products">
    <event type="alternative splicing"/>
    <isoform>
        <id>Q93045-1</id>
        <name>1</name>
        <sequence type="displayed"/>
    </isoform>
    <isoform>
        <id>Q93045-2</id>
        <name>2</name>
        <sequence type="described" ref="VSP_045047"/>
    </isoform>
</comment>
<comment type="tissue specificity">
    <text>Neuron specific.</text>
</comment>
<comment type="PTM">
    <text evidence="7">Sumoylated.</text>
</comment>
<comment type="PTM">
    <text evidence="1">Phosphorylated mostly by MAPK8, but also by MAPK9 and MAPK10 in the developing brain cortex.</text>
</comment>
<comment type="PTM">
    <text evidence="11">N-terminal palmitoylation promotes specific anchoring to the cytosolic leaflet of Golgi membranes and subsequent vesicular trafficking along dendrites and axons. Neuronal Stathmins are substrates for palmitoyltransferases ZDHHC3, ZDHHC7 and ZDHHC15.</text>
</comment>
<comment type="similarity">
    <text evidence="13">Belongs to the stathmin family.</text>
</comment>
<evidence type="ECO:0000250" key="1"/>
<evidence type="ECO:0000250" key="2">
    <source>
        <dbReference type="UniProtKB" id="P16949"/>
    </source>
</evidence>
<evidence type="ECO:0000250" key="3">
    <source>
        <dbReference type="UniProtKB" id="P21818"/>
    </source>
</evidence>
<evidence type="ECO:0000250" key="4">
    <source>
        <dbReference type="UniProtKB" id="P55821"/>
    </source>
</evidence>
<evidence type="ECO:0000255" key="5"/>
<evidence type="ECO:0000255" key="6">
    <source>
        <dbReference type="PROSITE-ProRule" id="PRU00998"/>
    </source>
</evidence>
<evidence type="ECO:0000269" key="7">
    <source>
    </source>
</evidence>
<evidence type="ECO:0000269" key="8">
    <source>
    </source>
</evidence>
<evidence type="ECO:0000269" key="9">
    <source>
    </source>
</evidence>
<evidence type="ECO:0000269" key="10">
    <source>
    </source>
</evidence>
<evidence type="ECO:0000269" key="11">
    <source>
    </source>
</evidence>
<evidence type="ECO:0000303" key="12">
    <source>
    </source>
</evidence>
<evidence type="ECO:0000305" key="13"/>
<evidence type="ECO:0007744" key="14">
    <source>
    </source>
</evidence>
<keyword id="KW-0025">Alternative splicing</keyword>
<keyword id="KW-0966">Cell projection</keyword>
<keyword id="KW-0175">Coiled coil</keyword>
<keyword id="KW-0963">Cytoplasm</keyword>
<keyword id="KW-0903">Direct protein sequencing</keyword>
<keyword id="KW-0967">Endosome</keyword>
<keyword id="KW-0333">Golgi apparatus</keyword>
<keyword id="KW-0449">Lipoprotein</keyword>
<keyword id="KW-0472">Membrane</keyword>
<keyword id="KW-0564">Palmitate</keyword>
<keyword id="KW-0597">Phosphoprotein</keyword>
<keyword id="KW-1267">Proteomics identification</keyword>
<keyword id="KW-1185">Reference proteome</keyword>
<keyword id="KW-0832">Ubl conjugation</keyword>
<dbReference type="EMBL" id="S82024">
    <property type="protein sequence ID" value="AAB36428.1"/>
    <property type="molecule type" value="mRNA"/>
</dbReference>
<dbReference type="EMBL" id="D50375">
    <property type="protein sequence ID" value="BAA23326.1"/>
    <property type="molecule type" value="mRNA"/>
</dbReference>
<dbReference type="EMBL" id="BT020034">
    <property type="protein sequence ID" value="AAV38837.1"/>
    <property type="molecule type" value="mRNA"/>
</dbReference>
<dbReference type="EMBL" id="CR456833">
    <property type="protein sequence ID" value="CAG33114.1"/>
    <property type="molecule type" value="mRNA"/>
</dbReference>
<dbReference type="EMBL" id="AK292737">
    <property type="protein sequence ID" value="BAF85426.1"/>
    <property type="molecule type" value="mRNA"/>
</dbReference>
<dbReference type="EMBL" id="AC016240">
    <property type="status" value="NOT_ANNOTATED_CDS"/>
    <property type="molecule type" value="Genomic_DNA"/>
</dbReference>
<dbReference type="EMBL" id="AC025599">
    <property type="status" value="NOT_ANNOTATED_CDS"/>
    <property type="molecule type" value="Genomic_DNA"/>
</dbReference>
<dbReference type="EMBL" id="CH471068">
    <property type="protein sequence ID" value="EAW87064.1"/>
    <property type="molecule type" value="Genomic_DNA"/>
</dbReference>
<dbReference type="EMBL" id="CH471068">
    <property type="protein sequence ID" value="EAW87065.1"/>
    <property type="molecule type" value="Genomic_DNA"/>
</dbReference>
<dbReference type="EMBL" id="BC006302">
    <property type="protein sequence ID" value="AAH06302.1"/>
    <property type="molecule type" value="mRNA"/>
</dbReference>
<dbReference type="EMBL" id="BQ069488">
    <property type="status" value="NOT_ANNOTATED_CDS"/>
    <property type="molecule type" value="mRNA"/>
</dbReference>
<dbReference type="CCDS" id="CCDS43748.1">
    <molecule id="Q93045-1"/>
</dbReference>
<dbReference type="CCDS" id="CCDS56542.1">
    <molecule id="Q93045-2"/>
</dbReference>
<dbReference type="RefSeq" id="NP_001186143.1">
    <molecule id="Q93045-2"/>
    <property type="nucleotide sequence ID" value="NM_001199214.2"/>
</dbReference>
<dbReference type="RefSeq" id="NP_008960.2">
    <molecule id="Q93045-1"/>
    <property type="nucleotide sequence ID" value="NM_007029.3"/>
</dbReference>
<dbReference type="SMR" id="Q93045"/>
<dbReference type="BioGRID" id="116258">
    <property type="interactions" value="86"/>
</dbReference>
<dbReference type="FunCoup" id="Q93045">
    <property type="interactions" value="59"/>
</dbReference>
<dbReference type="IntAct" id="Q93045">
    <property type="interactions" value="53"/>
</dbReference>
<dbReference type="MINT" id="Q93045"/>
<dbReference type="STRING" id="9606.ENSP00000429243"/>
<dbReference type="GlyGen" id="Q93045">
    <property type="glycosylation" value="1 site, 1 O-linked glycan (1 site)"/>
</dbReference>
<dbReference type="iPTMnet" id="Q93045"/>
<dbReference type="PhosphoSitePlus" id="Q93045"/>
<dbReference type="BioMuta" id="STMN2"/>
<dbReference type="DMDM" id="51704330"/>
<dbReference type="jPOST" id="Q93045"/>
<dbReference type="MassIVE" id="Q93045"/>
<dbReference type="PaxDb" id="9606-ENSP00000429243"/>
<dbReference type="PeptideAtlas" id="Q93045"/>
<dbReference type="ProteomicsDB" id="32221"/>
<dbReference type="ProteomicsDB" id="75686">
    <molecule id="Q93045-1"/>
</dbReference>
<dbReference type="Pumba" id="Q93045"/>
<dbReference type="ABCD" id="Q93045">
    <property type="antibodies" value="1 sequenced antibody"/>
</dbReference>
<dbReference type="Antibodypedia" id="6337">
    <property type="antibodies" value="446 antibodies from 39 providers"/>
</dbReference>
<dbReference type="DNASU" id="11075"/>
<dbReference type="Ensembl" id="ENST00000220876.12">
    <molecule id="Q93045-1"/>
    <property type="protein sequence ID" value="ENSP00000220876.7"/>
    <property type="gene ID" value="ENSG00000104435.14"/>
</dbReference>
<dbReference type="Ensembl" id="ENST00000518111.5">
    <molecule id="Q93045-2"/>
    <property type="protein sequence ID" value="ENSP00000429243.1"/>
    <property type="gene ID" value="ENSG00000104435.14"/>
</dbReference>
<dbReference type="GeneID" id="11075"/>
<dbReference type="KEGG" id="hsa:11075"/>
<dbReference type="MANE-Select" id="ENST00000220876.12">
    <property type="protein sequence ID" value="ENSP00000220876.7"/>
    <property type="RefSeq nucleotide sequence ID" value="NM_007029.4"/>
    <property type="RefSeq protein sequence ID" value="NP_008960.2"/>
</dbReference>
<dbReference type="UCSC" id="uc003ybj.3">
    <molecule id="Q93045-1"/>
    <property type="organism name" value="human"/>
</dbReference>
<dbReference type="AGR" id="HGNC:10577"/>
<dbReference type="CTD" id="11075"/>
<dbReference type="DisGeNET" id="11075"/>
<dbReference type="GeneCards" id="STMN2"/>
<dbReference type="HGNC" id="HGNC:10577">
    <property type="gene designation" value="STMN2"/>
</dbReference>
<dbReference type="HPA" id="ENSG00000104435">
    <property type="expression patterns" value="Tissue enriched (brain)"/>
</dbReference>
<dbReference type="MalaCards" id="STMN2"/>
<dbReference type="MIM" id="600621">
    <property type="type" value="gene"/>
</dbReference>
<dbReference type="neXtProt" id="NX_Q93045"/>
<dbReference type="OpenTargets" id="ENSG00000104435"/>
<dbReference type="PharmGKB" id="PA35540"/>
<dbReference type="VEuPathDB" id="HostDB:ENSG00000104435"/>
<dbReference type="eggNOG" id="ENOG502RENQ">
    <property type="taxonomic scope" value="Eukaryota"/>
</dbReference>
<dbReference type="GeneTree" id="ENSGT01030000234597"/>
<dbReference type="InParanoid" id="Q93045"/>
<dbReference type="OMA" id="CFYSEPH"/>
<dbReference type="OrthoDB" id="5986631at2759"/>
<dbReference type="PAN-GO" id="Q93045">
    <property type="GO annotations" value="7 GO annotations based on evolutionary models"/>
</dbReference>
<dbReference type="PhylomeDB" id="Q93045"/>
<dbReference type="TreeFam" id="TF326935"/>
<dbReference type="PathwayCommons" id="Q93045"/>
<dbReference type="Reactome" id="R-HSA-9696273">
    <property type="pathway name" value="RND1 GTPase cycle"/>
</dbReference>
<dbReference type="SignaLink" id="Q93045"/>
<dbReference type="SIGNOR" id="Q93045"/>
<dbReference type="BioGRID-ORCS" id="11075">
    <property type="hits" value="5 hits in 1139 CRISPR screens"/>
</dbReference>
<dbReference type="ChiTaRS" id="STMN2">
    <property type="organism name" value="human"/>
</dbReference>
<dbReference type="GeneWiki" id="STMN2"/>
<dbReference type="GenomeRNAi" id="11075"/>
<dbReference type="Pharos" id="Q93045">
    <property type="development level" value="Tbio"/>
</dbReference>
<dbReference type="PRO" id="PR:Q93045"/>
<dbReference type="Proteomes" id="UP000005640">
    <property type="component" value="Chromosome 8"/>
</dbReference>
<dbReference type="RNAct" id="Q93045">
    <property type="molecule type" value="protein"/>
</dbReference>
<dbReference type="Bgee" id="ENSG00000104435">
    <property type="expression patterns" value="Expressed in cortical plate and 162 other cell types or tissues"/>
</dbReference>
<dbReference type="ExpressionAtlas" id="Q93045">
    <property type="expression patterns" value="baseline and differential"/>
</dbReference>
<dbReference type="GO" id="GO:0005737">
    <property type="term" value="C:cytoplasm"/>
    <property type="evidence" value="ECO:0000314"/>
    <property type="project" value="UniProtKB"/>
</dbReference>
<dbReference type="GO" id="GO:0005829">
    <property type="term" value="C:cytosol"/>
    <property type="evidence" value="ECO:0000304"/>
    <property type="project" value="Reactome"/>
</dbReference>
<dbReference type="GO" id="GO:0005768">
    <property type="term" value="C:endosome"/>
    <property type="evidence" value="ECO:0007669"/>
    <property type="project" value="UniProtKB-SubCell"/>
</dbReference>
<dbReference type="GO" id="GO:0005794">
    <property type="term" value="C:Golgi apparatus"/>
    <property type="evidence" value="ECO:0007669"/>
    <property type="project" value="UniProtKB-SubCell"/>
</dbReference>
<dbReference type="GO" id="GO:0030426">
    <property type="term" value="C:growth cone"/>
    <property type="evidence" value="ECO:0000314"/>
    <property type="project" value="UniProtKB"/>
</dbReference>
<dbReference type="GO" id="GO:0030027">
    <property type="term" value="C:lamellipodium"/>
    <property type="evidence" value="ECO:0000314"/>
    <property type="project" value="UniProtKB"/>
</dbReference>
<dbReference type="GO" id="GO:0016020">
    <property type="term" value="C:membrane"/>
    <property type="evidence" value="ECO:0007669"/>
    <property type="project" value="UniProtKB-SubCell"/>
</dbReference>
<dbReference type="GO" id="GO:0043005">
    <property type="term" value="C:neuron projection"/>
    <property type="evidence" value="ECO:0000314"/>
    <property type="project" value="UniProtKB"/>
</dbReference>
<dbReference type="GO" id="GO:0043025">
    <property type="term" value="C:neuronal cell body"/>
    <property type="evidence" value="ECO:0000314"/>
    <property type="project" value="UniProtKB"/>
</dbReference>
<dbReference type="GO" id="GO:0048471">
    <property type="term" value="C:perinuclear region of cytoplasm"/>
    <property type="evidence" value="ECO:0000314"/>
    <property type="project" value="UniProtKB"/>
</dbReference>
<dbReference type="GO" id="GO:0048306">
    <property type="term" value="F:calcium-dependent protein binding"/>
    <property type="evidence" value="ECO:0000353"/>
    <property type="project" value="UniProtKB"/>
</dbReference>
<dbReference type="GO" id="GO:0015631">
    <property type="term" value="F:tubulin binding"/>
    <property type="evidence" value="ECO:0000318"/>
    <property type="project" value="GO_Central"/>
</dbReference>
<dbReference type="GO" id="GO:1990090">
    <property type="term" value="P:cellular response to nerve growth factor stimulus"/>
    <property type="evidence" value="ECO:0000314"/>
    <property type="project" value="UniProtKB"/>
</dbReference>
<dbReference type="GO" id="GO:0007019">
    <property type="term" value="P:microtubule depolymerization"/>
    <property type="evidence" value="ECO:0000318"/>
    <property type="project" value="GO_Central"/>
</dbReference>
<dbReference type="GO" id="GO:0007026">
    <property type="term" value="P:negative regulation of microtubule depolymerization"/>
    <property type="evidence" value="ECO:0000314"/>
    <property type="project" value="UniProtKB"/>
</dbReference>
<dbReference type="GO" id="GO:0031115">
    <property type="term" value="P:negative regulation of microtubule polymerization"/>
    <property type="evidence" value="ECO:0000314"/>
    <property type="project" value="UniProtKB"/>
</dbReference>
<dbReference type="GO" id="GO:0010977">
    <property type="term" value="P:negative regulation of neuron projection development"/>
    <property type="evidence" value="ECO:0000314"/>
    <property type="project" value="UniProtKB"/>
</dbReference>
<dbReference type="GO" id="GO:0031175">
    <property type="term" value="P:neuron projection development"/>
    <property type="evidence" value="ECO:0000318"/>
    <property type="project" value="GO_Central"/>
</dbReference>
<dbReference type="GO" id="GO:0031117">
    <property type="term" value="P:positive regulation of microtubule depolymerization"/>
    <property type="evidence" value="ECO:0000314"/>
    <property type="project" value="UniProtKB"/>
</dbReference>
<dbReference type="GO" id="GO:0010976">
    <property type="term" value="P:positive regulation of neuron projection development"/>
    <property type="evidence" value="ECO:0000314"/>
    <property type="project" value="UniProtKB"/>
</dbReference>
<dbReference type="GO" id="GO:0031110">
    <property type="term" value="P:regulation of microtubule polymerization or depolymerization"/>
    <property type="evidence" value="ECO:0000318"/>
    <property type="project" value="GO_Central"/>
</dbReference>
<dbReference type="Gene3D" id="6.10.280.30">
    <property type="match status" value="1"/>
</dbReference>
<dbReference type="InterPro" id="IPR030514">
    <property type="entry name" value="Stathmin_CS"/>
</dbReference>
<dbReference type="InterPro" id="IPR000956">
    <property type="entry name" value="Stathmin_fam"/>
</dbReference>
<dbReference type="InterPro" id="IPR036002">
    <property type="entry name" value="Stathmin_sf"/>
</dbReference>
<dbReference type="PANTHER" id="PTHR10104">
    <property type="entry name" value="STATHMIN"/>
    <property type="match status" value="1"/>
</dbReference>
<dbReference type="PANTHER" id="PTHR10104:SF18">
    <property type="entry name" value="STATHMIN-2"/>
    <property type="match status" value="1"/>
</dbReference>
<dbReference type="Pfam" id="PF00836">
    <property type="entry name" value="Stathmin"/>
    <property type="match status" value="1"/>
</dbReference>
<dbReference type="PIRSF" id="PIRSF002285">
    <property type="entry name" value="Stathmin"/>
    <property type="match status" value="1"/>
</dbReference>
<dbReference type="PRINTS" id="PR00345">
    <property type="entry name" value="STATHMIN"/>
</dbReference>
<dbReference type="SUPFAM" id="SSF101494">
    <property type="entry name" value="Stathmin"/>
    <property type="match status" value="1"/>
</dbReference>
<dbReference type="PROSITE" id="PS00563">
    <property type="entry name" value="STATHMIN_1"/>
    <property type="match status" value="1"/>
</dbReference>
<dbReference type="PROSITE" id="PS01041">
    <property type="entry name" value="STATHMIN_2"/>
    <property type="match status" value="1"/>
</dbReference>
<dbReference type="PROSITE" id="PS51663">
    <property type="entry name" value="STATHMIN_3"/>
    <property type="match status" value="1"/>
</dbReference>
<gene>
    <name type="primary">STMN2</name>
    <name type="synonym">SCG10</name>
    <name type="synonym">SCGN10</name>
</gene>
<organism>
    <name type="scientific">Homo sapiens</name>
    <name type="common">Human</name>
    <dbReference type="NCBI Taxonomy" id="9606"/>
    <lineage>
        <taxon>Eukaryota</taxon>
        <taxon>Metazoa</taxon>
        <taxon>Chordata</taxon>
        <taxon>Craniata</taxon>
        <taxon>Vertebrata</taxon>
        <taxon>Euteleostomi</taxon>
        <taxon>Mammalia</taxon>
        <taxon>Eutheria</taxon>
        <taxon>Euarchontoglires</taxon>
        <taxon>Primates</taxon>
        <taxon>Haplorrhini</taxon>
        <taxon>Catarrhini</taxon>
        <taxon>Hominidae</taxon>
        <taxon>Homo</taxon>
    </lineage>
</organism>
<proteinExistence type="evidence at protein level"/>
<sequence>MAKTAMAYKEKMKELSMLSLICSCFYPEPRNINIYTYDDMEVKQINKRASGQAFELILKPPSPISEAPRTLASPKKKDLSLEEIQKKLEAAEERRKSQEAQVLKQLAEKREHEREVLQKALEENNNFSKMAEEKLILKMEQIKENREANLAAIIERLQEKERHAAEVRRNKELQVELSG</sequence>
<feature type="chain" id="PRO_0000182396" description="Stathmin-2">
    <location>
        <begin position="1"/>
        <end position="179"/>
    </location>
</feature>
<feature type="domain" description="SLD" evidence="6">
    <location>
        <begin position="38"/>
        <end position="179"/>
    </location>
</feature>
<feature type="region of interest" description="Membrane attachment" evidence="5">
    <location>
        <begin position="1"/>
        <end position="26"/>
    </location>
</feature>
<feature type="region of interest" description="Regulatory/phosphorylation domain" evidence="5">
    <location>
        <begin position="39"/>
        <end position="96"/>
    </location>
</feature>
<feature type="coiled-coil region" evidence="5">
    <location>
        <begin position="75"/>
        <end position="179"/>
    </location>
</feature>
<feature type="modified residue" description="Phosphoserine" evidence="5">
    <location>
        <position position="16"/>
    </location>
</feature>
<feature type="modified residue" description="Phosphoserine" evidence="4 5">
    <location>
        <position position="50"/>
    </location>
</feature>
<feature type="modified residue" description="Phosphoserine" evidence="14">
    <location>
        <position position="62"/>
    </location>
</feature>
<feature type="modified residue" description="Phosphoserine" evidence="3">
    <location>
        <position position="73"/>
    </location>
</feature>
<feature type="modified residue" description="Phosphoserine" evidence="2 5">
    <location>
        <position position="97"/>
    </location>
</feature>
<feature type="lipid moiety-binding region" description="S-palmitoyl cysteine" evidence="11">
    <location>
        <position position="22"/>
    </location>
</feature>
<feature type="lipid moiety-binding region" description="S-palmitoyl cysteine" evidence="11">
    <location>
        <position position="24"/>
    </location>
</feature>
<feature type="splice variant" id="VSP_045047" description="In isoform 2." evidence="12">
    <original>ERHAAEVRRNKELQVELSG</original>
    <variation>LVKFISSELKESIESQFLELQREGEKQ</variation>
    <location>
        <begin position="161"/>
        <end position="179"/>
    </location>
</feature>
<feature type="sequence conflict" description="In Ref. 1; AAB36428." evidence="13" ref="1">
    <original>E</original>
    <variation>G</variation>
    <location>
        <position position="92"/>
    </location>
</feature>
<feature type="sequence conflict" description="In Ref. 2; BAA23326." evidence="13" ref="2">
    <original>E</original>
    <variation>G</variation>
    <location>
        <position position="122"/>
    </location>
</feature>
<reference key="1">
    <citation type="journal article" date="1995" name="Neurobiol. Aging">
        <title>SCG10, a neuron-specific growth-associated protein in Alzheimer's disease.</title>
        <authorList>
            <person name="Okazaki T."/>
            <person name="Wang H."/>
            <person name="Masliah E."/>
            <person name="Cao M."/>
            <person name="Johnson S.A."/>
            <person name="Sundsmo M."/>
            <person name="Saitoh T."/>
            <person name="Mori N."/>
        </authorList>
    </citation>
    <scope>NUCLEOTIDE SEQUENCE [MRNA] (ISOFORM 1)</scope>
</reference>
<reference key="2">
    <citation type="submission" date="1995-04" db="EMBL/GenBank/DDBJ databases">
        <title>Molecular cloning of a human homologue of chicken silencer element (SCG10) gene.</title>
        <authorList>
            <person name="Fujiwara T."/>
            <person name="Kawai A."/>
            <person name="Shimizu F."/>
            <person name="Shinomiya K."/>
            <person name="Hirano H."/>
            <person name="Okuno S."/>
            <person name="Ozaki K."/>
            <person name="Katagiri T."/>
            <person name="Takeda S."/>
            <person name="Kuga Y."/>
            <person name="Shimada Y."/>
            <person name="Nagata M."/>
            <person name="Takaichi A."/>
            <person name="Watanabe T."/>
            <person name="Horie M."/>
            <person name="Nakamura Y."/>
            <person name="Takahashi E."/>
            <person name="Hirai Y."/>
        </authorList>
    </citation>
    <scope>NUCLEOTIDE SEQUENCE [MRNA] (ISOFORM 1)</scope>
    <source>
        <tissue>Brain</tissue>
    </source>
</reference>
<reference key="3">
    <citation type="submission" date="2003-05" db="EMBL/GenBank/DDBJ databases">
        <title>Cloning of human full-length CDSs in BD Creator(TM) system donor vector.</title>
        <authorList>
            <person name="Kalnine N."/>
            <person name="Chen X."/>
            <person name="Rolfs A."/>
            <person name="Halleck A."/>
            <person name="Hines L."/>
            <person name="Eisenstein S."/>
            <person name="Koundinya M."/>
            <person name="Raphael J."/>
            <person name="Moreira D."/>
            <person name="Kelley T."/>
            <person name="LaBaer J."/>
            <person name="Lin Y."/>
            <person name="Phelan M."/>
            <person name="Farmer A."/>
        </authorList>
    </citation>
    <scope>NUCLEOTIDE SEQUENCE [LARGE SCALE MRNA] (ISOFORM 1)</scope>
</reference>
<reference key="4">
    <citation type="submission" date="2004-06" db="EMBL/GenBank/DDBJ databases">
        <title>Cloning of human full open reading frames in Gateway(TM) system entry vector (pDONR201).</title>
        <authorList>
            <person name="Ebert L."/>
            <person name="Schick M."/>
            <person name="Neubert P."/>
            <person name="Schatten R."/>
            <person name="Henze S."/>
            <person name="Korn B."/>
        </authorList>
    </citation>
    <scope>NUCLEOTIDE SEQUENCE [LARGE SCALE MRNA] (ISOFORM 1)</scope>
</reference>
<reference key="5">
    <citation type="journal article" date="2004" name="Nat. Genet.">
        <title>Complete sequencing and characterization of 21,243 full-length human cDNAs.</title>
        <authorList>
            <person name="Ota T."/>
            <person name="Suzuki Y."/>
            <person name="Nishikawa T."/>
            <person name="Otsuki T."/>
            <person name="Sugiyama T."/>
            <person name="Irie R."/>
            <person name="Wakamatsu A."/>
            <person name="Hayashi K."/>
            <person name="Sato H."/>
            <person name="Nagai K."/>
            <person name="Kimura K."/>
            <person name="Makita H."/>
            <person name="Sekine M."/>
            <person name="Obayashi M."/>
            <person name="Nishi T."/>
            <person name="Shibahara T."/>
            <person name="Tanaka T."/>
            <person name="Ishii S."/>
            <person name="Yamamoto J."/>
            <person name="Saito K."/>
            <person name="Kawai Y."/>
            <person name="Isono Y."/>
            <person name="Nakamura Y."/>
            <person name="Nagahari K."/>
            <person name="Murakami K."/>
            <person name="Yasuda T."/>
            <person name="Iwayanagi T."/>
            <person name="Wagatsuma M."/>
            <person name="Shiratori A."/>
            <person name="Sudo H."/>
            <person name="Hosoiri T."/>
            <person name="Kaku Y."/>
            <person name="Kodaira H."/>
            <person name="Kondo H."/>
            <person name="Sugawara M."/>
            <person name="Takahashi M."/>
            <person name="Kanda K."/>
            <person name="Yokoi T."/>
            <person name="Furuya T."/>
            <person name="Kikkawa E."/>
            <person name="Omura Y."/>
            <person name="Abe K."/>
            <person name="Kamihara K."/>
            <person name="Katsuta N."/>
            <person name="Sato K."/>
            <person name="Tanikawa M."/>
            <person name="Yamazaki M."/>
            <person name="Ninomiya K."/>
            <person name="Ishibashi T."/>
            <person name="Yamashita H."/>
            <person name="Murakawa K."/>
            <person name="Fujimori K."/>
            <person name="Tanai H."/>
            <person name="Kimata M."/>
            <person name="Watanabe M."/>
            <person name="Hiraoka S."/>
            <person name="Chiba Y."/>
            <person name="Ishida S."/>
            <person name="Ono Y."/>
            <person name="Takiguchi S."/>
            <person name="Watanabe S."/>
            <person name="Yosida M."/>
            <person name="Hotuta T."/>
            <person name="Kusano J."/>
            <person name="Kanehori K."/>
            <person name="Takahashi-Fujii A."/>
            <person name="Hara H."/>
            <person name="Tanase T.-O."/>
            <person name="Nomura Y."/>
            <person name="Togiya S."/>
            <person name="Komai F."/>
            <person name="Hara R."/>
            <person name="Takeuchi K."/>
            <person name="Arita M."/>
            <person name="Imose N."/>
            <person name="Musashino K."/>
            <person name="Yuuki H."/>
            <person name="Oshima A."/>
            <person name="Sasaki N."/>
            <person name="Aotsuka S."/>
            <person name="Yoshikawa Y."/>
            <person name="Matsunawa H."/>
            <person name="Ichihara T."/>
            <person name="Shiohata N."/>
            <person name="Sano S."/>
            <person name="Moriya S."/>
            <person name="Momiyama H."/>
            <person name="Satoh N."/>
            <person name="Takami S."/>
            <person name="Terashima Y."/>
            <person name="Suzuki O."/>
            <person name="Nakagawa S."/>
            <person name="Senoh A."/>
            <person name="Mizoguchi H."/>
            <person name="Goto Y."/>
            <person name="Shimizu F."/>
            <person name="Wakebe H."/>
            <person name="Hishigaki H."/>
            <person name="Watanabe T."/>
            <person name="Sugiyama A."/>
            <person name="Takemoto M."/>
            <person name="Kawakami B."/>
            <person name="Yamazaki M."/>
            <person name="Watanabe K."/>
            <person name="Kumagai A."/>
            <person name="Itakura S."/>
            <person name="Fukuzumi Y."/>
            <person name="Fujimori Y."/>
            <person name="Komiyama M."/>
            <person name="Tashiro H."/>
            <person name="Tanigami A."/>
            <person name="Fujiwara T."/>
            <person name="Ono T."/>
            <person name="Yamada K."/>
            <person name="Fujii Y."/>
            <person name="Ozaki K."/>
            <person name="Hirao M."/>
            <person name="Ohmori Y."/>
            <person name="Kawabata A."/>
            <person name="Hikiji T."/>
            <person name="Kobatake N."/>
            <person name="Inagaki H."/>
            <person name="Ikema Y."/>
            <person name="Okamoto S."/>
            <person name="Okitani R."/>
            <person name="Kawakami T."/>
            <person name="Noguchi S."/>
            <person name="Itoh T."/>
            <person name="Shigeta K."/>
            <person name="Senba T."/>
            <person name="Matsumura K."/>
            <person name="Nakajima Y."/>
            <person name="Mizuno T."/>
            <person name="Morinaga M."/>
            <person name="Sasaki M."/>
            <person name="Togashi T."/>
            <person name="Oyama M."/>
            <person name="Hata H."/>
            <person name="Watanabe M."/>
            <person name="Komatsu T."/>
            <person name="Mizushima-Sugano J."/>
            <person name="Satoh T."/>
            <person name="Shirai Y."/>
            <person name="Takahashi Y."/>
            <person name="Nakagawa K."/>
            <person name="Okumura K."/>
            <person name="Nagase T."/>
            <person name="Nomura N."/>
            <person name="Kikuchi H."/>
            <person name="Masuho Y."/>
            <person name="Yamashita R."/>
            <person name="Nakai K."/>
            <person name="Yada T."/>
            <person name="Nakamura Y."/>
            <person name="Ohara O."/>
            <person name="Isogai T."/>
            <person name="Sugano S."/>
        </authorList>
    </citation>
    <scope>NUCLEOTIDE SEQUENCE [LARGE SCALE MRNA] (ISOFORM 1)</scope>
    <source>
        <tissue>Kidney</tissue>
    </source>
</reference>
<reference key="6">
    <citation type="journal article" date="2006" name="Nature">
        <title>DNA sequence and analysis of human chromosome 8.</title>
        <authorList>
            <person name="Nusbaum C."/>
            <person name="Mikkelsen T.S."/>
            <person name="Zody M.C."/>
            <person name="Asakawa S."/>
            <person name="Taudien S."/>
            <person name="Garber M."/>
            <person name="Kodira C.D."/>
            <person name="Schueler M.G."/>
            <person name="Shimizu A."/>
            <person name="Whittaker C.A."/>
            <person name="Chang J.L."/>
            <person name="Cuomo C.A."/>
            <person name="Dewar K."/>
            <person name="FitzGerald M.G."/>
            <person name="Yang X."/>
            <person name="Allen N.R."/>
            <person name="Anderson S."/>
            <person name="Asakawa T."/>
            <person name="Blechschmidt K."/>
            <person name="Bloom T."/>
            <person name="Borowsky M.L."/>
            <person name="Butler J."/>
            <person name="Cook A."/>
            <person name="Corum B."/>
            <person name="DeArellano K."/>
            <person name="DeCaprio D."/>
            <person name="Dooley K.T."/>
            <person name="Dorris L. III"/>
            <person name="Engels R."/>
            <person name="Gloeckner G."/>
            <person name="Hafez N."/>
            <person name="Hagopian D.S."/>
            <person name="Hall J.L."/>
            <person name="Ishikawa S.K."/>
            <person name="Jaffe D.B."/>
            <person name="Kamat A."/>
            <person name="Kudoh J."/>
            <person name="Lehmann R."/>
            <person name="Lokitsang T."/>
            <person name="Macdonald P."/>
            <person name="Major J.E."/>
            <person name="Matthews C.D."/>
            <person name="Mauceli E."/>
            <person name="Menzel U."/>
            <person name="Mihalev A.H."/>
            <person name="Minoshima S."/>
            <person name="Murayama Y."/>
            <person name="Naylor J.W."/>
            <person name="Nicol R."/>
            <person name="Nguyen C."/>
            <person name="O'Leary S.B."/>
            <person name="O'Neill K."/>
            <person name="Parker S.C.J."/>
            <person name="Polley A."/>
            <person name="Raymond C.K."/>
            <person name="Reichwald K."/>
            <person name="Rodriguez J."/>
            <person name="Sasaki T."/>
            <person name="Schilhabel M."/>
            <person name="Siddiqui R."/>
            <person name="Smith C.L."/>
            <person name="Sneddon T.P."/>
            <person name="Talamas J.A."/>
            <person name="Tenzin P."/>
            <person name="Topham K."/>
            <person name="Venkataraman V."/>
            <person name="Wen G."/>
            <person name="Yamazaki S."/>
            <person name="Young S.K."/>
            <person name="Zeng Q."/>
            <person name="Zimmer A.R."/>
            <person name="Rosenthal A."/>
            <person name="Birren B.W."/>
            <person name="Platzer M."/>
            <person name="Shimizu N."/>
            <person name="Lander E.S."/>
        </authorList>
    </citation>
    <scope>NUCLEOTIDE SEQUENCE [LARGE SCALE GENOMIC DNA]</scope>
</reference>
<reference key="7">
    <citation type="submission" date="2005-07" db="EMBL/GenBank/DDBJ databases">
        <authorList>
            <person name="Mural R.J."/>
            <person name="Istrail S."/>
            <person name="Sutton G.G."/>
            <person name="Florea L."/>
            <person name="Halpern A.L."/>
            <person name="Mobarry C.M."/>
            <person name="Lippert R."/>
            <person name="Walenz B."/>
            <person name="Shatkay H."/>
            <person name="Dew I."/>
            <person name="Miller J.R."/>
            <person name="Flanigan M.J."/>
            <person name="Edwards N.J."/>
            <person name="Bolanos R."/>
            <person name="Fasulo D."/>
            <person name="Halldorsson B.V."/>
            <person name="Hannenhalli S."/>
            <person name="Turner R."/>
            <person name="Yooseph S."/>
            <person name="Lu F."/>
            <person name="Nusskern D.R."/>
            <person name="Shue B.C."/>
            <person name="Zheng X.H."/>
            <person name="Zhong F."/>
            <person name="Delcher A.L."/>
            <person name="Huson D.H."/>
            <person name="Kravitz S.A."/>
            <person name="Mouchard L."/>
            <person name="Reinert K."/>
            <person name="Remington K.A."/>
            <person name="Clark A.G."/>
            <person name="Waterman M.S."/>
            <person name="Eichler E.E."/>
            <person name="Adams M.D."/>
            <person name="Hunkapiller M.W."/>
            <person name="Myers E.W."/>
            <person name="Venter J.C."/>
        </authorList>
    </citation>
    <scope>NUCLEOTIDE SEQUENCE [LARGE SCALE GENOMIC DNA]</scope>
</reference>
<reference key="8">
    <citation type="journal article" date="2004" name="Genome Res.">
        <title>The status, quality, and expansion of the NIH full-length cDNA project: the Mammalian Gene Collection (MGC).</title>
        <authorList>
            <consortium name="The MGC Project Team"/>
        </authorList>
    </citation>
    <scope>NUCLEOTIDE SEQUENCE [LARGE SCALE MRNA] (ISOFORMS 1 AND 2)</scope>
    <source>
        <tissue>Brain</tissue>
        <tissue>Neuroblastoma</tissue>
    </source>
</reference>
<reference key="9">
    <citation type="submission" date="2008-12" db="UniProtKB">
        <authorList>
            <person name="Lubec G."/>
            <person name="Chen W.-Q."/>
            <person name="Sun Y."/>
        </authorList>
    </citation>
    <scope>PROTEIN SEQUENCE OF 12-43; 48-69; 78-86; 147-156 AND 172-179</scope>
    <scope>IDENTIFICATION BY MASS SPECTROMETRY</scope>
    <source>
        <tissue>Fetal brain cortex</tissue>
    </source>
</reference>
<reference key="10">
    <citation type="journal article" date="2005" name="J. Biol. Chem.">
        <title>Systematic identification and analysis of mammalian small ubiquitin-like modifier substrates.</title>
        <authorList>
            <person name="Gocke C.B."/>
            <person name="Yu H."/>
            <person name="Kang J."/>
        </authorList>
    </citation>
    <scope>SUMOYLATION</scope>
</reference>
<reference key="11">
    <citation type="journal article" date="2008" name="BMB Rep.">
        <title>BRI3 associates with SCG10 and attenuates NGF-induced neurite outgrowth in PC12 cells.</title>
        <authorList>
            <person name="Gong Y."/>
            <person name="Wu J."/>
            <person name="Qiang H."/>
            <person name="Liu B."/>
            <person name="Chi Z."/>
            <person name="Chen T."/>
            <person name="Yin B."/>
            <person name="Peng X."/>
            <person name="Yuan J."/>
        </authorList>
    </citation>
    <scope>INTERACTION WITH ITM2C</scope>
</reference>
<reference key="12">
    <citation type="journal article" date="2010" name="Hum. Mol. Genet.">
        <title>KBP interacts with SCG10, linking Goldberg-Shprintzen syndrome to microtubule dynamics and neuronal differentiation.</title>
        <authorList>
            <person name="Alves M.M."/>
            <person name="Burzynski G."/>
            <person name="Delalande J.M."/>
            <person name="Osinga J."/>
            <person name="van der Goot A."/>
            <person name="Dolga A.M."/>
            <person name="de Graaff E."/>
            <person name="Brooks A.S."/>
            <person name="Metzger M."/>
            <person name="Eisel U.L."/>
            <person name="Shepherd I."/>
            <person name="Eggen B.J."/>
            <person name="Hofstra R.M."/>
        </authorList>
    </citation>
    <scope>INTERACTION WITH KIFBP</scope>
</reference>
<reference key="13">
    <citation type="journal article" date="2011" name="Biochim. Biophys. Acta">
        <title>Calmyrin1 binds to SCG10 protein (stathmin2) to modulate neurite outgrowth.</title>
        <authorList>
            <person name="Sobczak A."/>
            <person name="Debowska K."/>
            <person name="Blazejczyk M."/>
            <person name="Kreutz M.R."/>
            <person name="Kuznicki J."/>
            <person name="Wojda U."/>
        </authorList>
    </citation>
    <scope>INTERACTION WITH CIB1</scope>
    <scope>SUBCELLULAR LOCATION</scope>
</reference>
<reference key="14">
    <citation type="journal article" date="2011" name="Mol. Biol. Cell">
        <title>Subcellular Golgi localization of stathmin family proteins is promoted by a specific set of DHHC palmitoyl transferases.</title>
        <authorList>
            <person name="Levy A.D."/>
            <person name="Devignot V."/>
            <person name="Fukata Y."/>
            <person name="Fukata M."/>
            <person name="Sobel A."/>
            <person name="Chauvin S."/>
        </authorList>
    </citation>
    <scope>PALMITOYLATION AT CYS-22 AND CYS-24 BY ZDHHC3; ZDHHC7 AND ZDHHC15</scope>
    <scope>SUBCELLULAR LOCATION</scope>
</reference>
<reference key="15">
    <citation type="journal article" date="2014" name="J. Proteomics">
        <title>An enzyme assisted RP-RPLC approach for in-depth analysis of human liver phosphoproteome.</title>
        <authorList>
            <person name="Bian Y."/>
            <person name="Song C."/>
            <person name="Cheng K."/>
            <person name="Dong M."/>
            <person name="Wang F."/>
            <person name="Huang J."/>
            <person name="Sun D."/>
            <person name="Wang L."/>
            <person name="Ye M."/>
            <person name="Zou H."/>
        </authorList>
    </citation>
    <scope>PHOSPHORYLATION [LARGE SCALE ANALYSIS] AT SER-62</scope>
    <scope>IDENTIFICATION BY MASS SPECTROMETRY [LARGE SCALE ANALYSIS]</scope>
    <source>
        <tissue>Liver</tissue>
    </source>
</reference>
<name>STMN2_HUMAN</name>
<protein>
    <recommendedName>
        <fullName>Stathmin-2</fullName>
    </recommendedName>
    <alternativeName>
        <fullName>Superior cervical ganglion-10 protein</fullName>
        <shortName>Protein SCG10</shortName>
    </alternativeName>
</protein>
<accession>Q93045</accession>
<accession>A8K9M2</accession>
<accession>G3V110</accession>
<accession>O14952</accession>
<accession>Q6PK68</accession>